<dbReference type="EMBL" id="BA000037">
    <property type="protein sequence ID" value="BAC94840.1"/>
    <property type="molecule type" value="Genomic_DNA"/>
</dbReference>
<dbReference type="RefSeq" id="WP_011080139.1">
    <property type="nucleotide sequence ID" value="NC_005139.1"/>
</dbReference>
<dbReference type="SMR" id="Q7MJT4"/>
<dbReference type="STRING" id="672.VV93_v1c18400"/>
<dbReference type="KEGG" id="vvy:VV2076"/>
<dbReference type="eggNOG" id="COG3768">
    <property type="taxonomic scope" value="Bacteria"/>
</dbReference>
<dbReference type="HOGENOM" id="CLU_057693_2_0_6"/>
<dbReference type="Proteomes" id="UP000002675">
    <property type="component" value="Chromosome I"/>
</dbReference>
<dbReference type="GO" id="GO:0005886">
    <property type="term" value="C:plasma membrane"/>
    <property type="evidence" value="ECO:0007669"/>
    <property type="project" value="UniProtKB-SubCell"/>
</dbReference>
<dbReference type="HAMAP" id="MF_01085">
    <property type="entry name" value="UPF0283"/>
    <property type="match status" value="1"/>
</dbReference>
<dbReference type="InterPro" id="IPR021147">
    <property type="entry name" value="DUF697"/>
</dbReference>
<dbReference type="InterPro" id="IPR006507">
    <property type="entry name" value="UPF0283"/>
</dbReference>
<dbReference type="NCBIfam" id="TIGR01620">
    <property type="entry name" value="hyp_HI0043"/>
    <property type="match status" value="1"/>
</dbReference>
<dbReference type="PANTHER" id="PTHR39342">
    <property type="entry name" value="UPF0283 MEMBRANE PROTEIN YCJF"/>
    <property type="match status" value="1"/>
</dbReference>
<dbReference type="PANTHER" id="PTHR39342:SF1">
    <property type="entry name" value="UPF0283 MEMBRANE PROTEIN YCJF"/>
    <property type="match status" value="1"/>
</dbReference>
<dbReference type="Pfam" id="PF05128">
    <property type="entry name" value="DUF697"/>
    <property type="match status" value="1"/>
</dbReference>
<accession>Q7MJT4</accession>
<evidence type="ECO:0000255" key="1">
    <source>
        <dbReference type="HAMAP-Rule" id="MF_01085"/>
    </source>
</evidence>
<gene>
    <name type="ordered locus">VV2076</name>
</gene>
<name>Y2076_VIBVY</name>
<proteinExistence type="inferred from homology"/>
<comment type="subcellular location">
    <subcellularLocation>
        <location evidence="1">Cell inner membrane</location>
        <topology evidence="1">Multi-pass membrane protein</topology>
    </subcellularLocation>
</comment>
<comment type="similarity">
    <text evidence="1">Belongs to the UPF0283 family.</text>
</comment>
<keyword id="KW-0997">Cell inner membrane</keyword>
<keyword id="KW-1003">Cell membrane</keyword>
<keyword id="KW-0472">Membrane</keyword>
<keyword id="KW-0812">Transmembrane</keyword>
<keyword id="KW-1133">Transmembrane helix</keyword>
<organism>
    <name type="scientific">Vibrio vulnificus (strain YJ016)</name>
    <dbReference type="NCBI Taxonomy" id="196600"/>
    <lineage>
        <taxon>Bacteria</taxon>
        <taxon>Pseudomonadati</taxon>
        <taxon>Pseudomonadota</taxon>
        <taxon>Gammaproteobacteria</taxon>
        <taxon>Vibrionales</taxon>
        <taxon>Vibrionaceae</taxon>
        <taxon>Vibrio</taxon>
    </lineage>
</organism>
<feature type="chain" id="PRO_0000214190" description="UPF0283 membrane protein VV2076">
    <location>
        <begin position="1"/>
        <end position="341"/>
    </location>
</feature>
<feature type="transmembrane region" description="Helical" evidence="1">
    <location>
        <begin position="64"/>
        <end position="84"/>
    </location>
</feature>
<feature type="transmembrane region" description="Helical" evidence="1">
    <location>
        <begin position="93"/>
        <end position="113"/>
    </location>
</feature>
<feature type="transmembrane region" description="Helical" evidence="1">
    <location>
        <begin position="207"/>
        <end position="227"/>
    </location>
</feature>
<feature type="transmembrane region" description="Helical" evidence="1">
    <location>
        <begin position="255"/>
        <end position="275"/>
    </location>
</feature>
<sequence length="341" mass="37251">MSDLKPKQVFEETIFSQQDKPELTAQQQFDQQQTFIPTTIEETEPELEDALEQVIRPSGRRKWLAGGLFAAFAGLVGWQAVDSVLSAMQNGDWLTLGWSGFISVLAGLGLGAMGKELWKLRQLRHLFSVQEQGEKLLQSDSVGQGKAFCQQVAKQSGVAEENPAYDRWKNSVNTAHSDAEILQMYDAMVVTQQDKQATKVISRFATESAALVAISPLAIADMLLVAWRNFKMIDTLSTIYGIELGYASRIRLLRLVLANMAVAGASELVIDAGMDLMSMDLAGKLSARAGQGVGVGILTARLGLKAMALLRPIPWQAETQVKLSAIRKEIVSKVASITLKP</sequence>
<reference key="1">
    <citation type="journal article" date="2003" name="Genome Res.">
        <title>Comparative genome analysis of Vibrio vulnificus, a marine pathogen.</title>
        <authorList>
            <person name="Chen C.-Y."/>
            <person name="Wu K.-M."/>
            <person name="Chang Y.-C."/>
            <person name="Chang C.-H."/>
            <person name="Tsai H.-C."/>
            <person name="Liao T.-L."/>
            <person name="Liu Y.-M."/>
            <person name="Chen H.-J."/>
            <person name="Shen A.B.-T."/>
            <person name="Li J.-C."/>
            <person name="Su T.-L."/>
            <person name="Shao C.-P."/>
            <person name="Lee C.-T."/>
            <person name="Hor L.-I."/>
            <person name="Tsai S.-F."/>
        </authorList>
    </citation>
    <scope>NUCLEOTIDE SEQUENCE [LARGE SCALE GENOMIC DNA]</scope>
    <source>
        <strain>YJ016</strain>
    </source>
</reference>
<protein>
    <recommendedName>
        <fullName evidence="1">UPF0283 membrane protein VV2076</fullName>
    </recommendedName>
</protein>